<protein>
    <recommendedName>
        <fullName evidence="4">Collagen alpha-2(I) chain</fullName>
        <shortName evidence="4">col1a2</shortName>
    </recommendedName>
    <alternativeName>
        <fullName evidence="4">Alpha-2 type I collagen</fullName>
    </alternativeName>
</protein>
<accession>C0HM85</accession>
<evidence type="ECO:0000255" key="1">
    <source>
        <dbReference type="PROSITE-ProRule" id="PRU00793"/>
    </source>
</evidence>
<evidence type="ECO:0000256" key="2">
    <source>
        <dbReference type="SAM" id="MobiDB-lite"/>
    </source>
</evidence>
<evidence type="ECO:0000303" key="3">
    <source ref="1"/>
</evidence>
<evidence type="ECO:0000305" key="4"/>
<organism evidence="3">
    <name type="scientific">Epinephelus marginatus</name>
    <name type="common">Dusky grouper</name>
    <dbReference type="NCBI Taxonomy" id="179535"/>
    <lineage>
        <taxon>Eukaryota</taxon>
        <taxon>Metazoa</taxon>
        <taxon>Chordata</taxon>
        <taxon>Craniata</taxon>
        <taxon>Vertebrata</taxon>
        <taxon>Euteleostomi</taxon>
        <taxon>Actinopterygii</taxon>
        <taxon>Neopterygii</taxon>
        <taxon>Teleostei</taxon>
        <taxon>Neoteleostei</taxon>
        <taxon>Acanthomorphata</taxon>
        <taxon>Eupercaria</taxon>
        <taxon>Perciformes</taxon>
        <taxon>Serranoidei</taxon>
        <taxon>Serranidae</taxon>
        <taxon>Epinephelinae</taxon>
        <taxon>Epinephelini</taxon>
        <taxon>Epinephelus</taxon>
    </lineage>
</organism>
<dbReference type="GO" id="GO:0005581">
    <property type="term" value="C:collagen trimer"/>
    <property type="evidence" value="ECO:0007669"/>
    <property type="project" value="UniProtKB-KW"/>
</dbReference>
<dbReference type="GO" id="GO:0031012">
    <property type="term" value="C:extracellular matrix"/>
    <property type="evidence" value="ECO:0007669"/>
    <property type="project" value="TreeGrafter"/>
</dbReference>
<dbReference type="GO" id="GO:0005615">
    <property type="term" value="C:extracellular space"/>
    <property type="evidence" value="ECO:0007669"/>
    <property type="project" value="TreeGrafter"/>
</dbReference>
<dbReference type="GO" id="GO:0005201">
    <property type="term" value="F:extracellular matrix structural constituent"/>
    <property type="evidence" value="ECO:0007669"/>
    <property type="project" value="InterPro"/>
</dbReference>
<dbReference type="Gene3D" id="2.60.120.1000">
    <property type="match status" value="1"/>
</dbReference>
<dbReference type="InterPro" id="IPR008160">
    <property type="entry name" value="Collagen"/>
</dbReference>
<dbReference type="InterPro" id="IPR050149">
    <property type="entry name" value="Collagen_superfamily"/>
</dbReference>
<dbReference type="InterPro" id="IPR000885">
    <property type="entry name" value="Fib_collagen_C"/>
</dbReference>
<dbReference type="PANTHER" id="PTHR24023">
    <property type="entry name" value="COLLAGEN ALPHA"/>
    <property type="match status" value="1"/>
</dbReference>
<dbReference type="PANTHER" id="PTHR24023:SF1082">
    <property type="entry name" value="COLLAGEN TRIPLE HELIX REPEAT"/>
    <property type="match status" value="1"/>
</dbReference>
<dbReference type="Pfam" id="PF01410">
    <property type="entry name" value="COLFI"/>
    <property type="match status" value="1"/>
</dbReference>
<dbReference type="Pfam" id="PF01391">
    <property type="entry name" value="Collagen"/>
    <property type="match status" value="6"/>
</dbReference>
<dbReference type="SMART" id="SM00038">
    <property type="entry name" value="COLFI"/>
    <property type="match status" value="1"/>
</dbReference>
<dbReference type="PROSITE" id="PS51461">
    <property type="entry name" value="NC1_FIB"/>
    <property type="match status" value="1"/>
</dbReference>
<name>CO1A2_EPIMA</name>
<sequence length="1127" mass="101980">DGKPGLPGPAGPPGPPGLGGNFAAQYDGVKAPDPGPGPMGMMGARGPPGPPGPPGAQGHTGHPGEPGEPGQTGPVGPRGPPGPPGKSGEDGNNGRPGKPGDRGAPGPQGARGFPGTPGLPGMKGHRGYTGLDGRKGEPGGAGAKGEPGAHGAAGSPGLAGSRGMPGERGRAGPAGPAGARGPAGPLGAAGPPGFPGGPGPKGELGPAGATGPSGAQGSRGEPGPNGAVGPVGPPGNPGNNGLNGAKGAAGTPGVAGAPGFPGPRGGPGPQGPQGAAGQRGLAGDPGTQGVKGDGGPKGEPGNSGPQGPPGPQGEEGKRGPTGELGATGPAGNRGARGAPGSRGMPGSEGRGASGAAGPRGPPGDAGRAGESGPAGLRGLPGSPGSSGPPGKEGAAGPAGQDGRGGPPGPTGPRGPSGEAGKPGDKGATGPTGLRGAPGPDGNNGATGATGPAGGPGEKGEQGAAGAPGFQGLPGPAGGAGEAGKPGDRGLPGDQGVSGPAGAKGERGNPGAAGASGPQGPLGPRGPAGAPGTDGGKGEPGAAGAAGGPGHQGPGGMPGERGAAGGPGGKGEKGEAGHRGPDGNAGRDGSRGMPGPAGPPGPTGANGDKGESGSFGPAGPAGARGASGERGEVGPAGAPGFAGPPGADGQTGARGERGPSGGKGESGPSGPAGPAGQSGPPGASGPAGPTGARGDNGPPGLTGFPGAAGRVGAAGPAGLVGPPGSAGPAGKDGPRGLRGDPGPSGPSGDQGMVGPPGPSGEKGPSGEPGTPGTSGPLGLQGFVGLPGARGDRGSPGGAGAVGEAGRVGPAGPAGARGAPGNLGLPGMTGPQGEAGREGNPGNDGPPGRPGAPGFKGDRGEPGSSGAMGLAGAPGPAGPSGGAGRPGNRGESGPGGAAGAVGPAGARGAAGPSGPRGEKGVAGEKGERGMKGLRGHAGLQGMPGPSGPSGDTGSAGPNGPAGPRGPAGPHGPPGKDGRAGGHGTLGSPGARGPPGYVGPAGPPGXPGLPGPAGPAGGGYDVSGYDEYRAAKDYEVDATLKSLNTQLENLLTPEGSRKETCLHAHPGSLARAVVVQGSNDVELRFTFSVLEDGCTRTNKPSRLPLLDLAPLDLGGADQEFGLDLGPVCFK</sequence>
<feature type="chain" id="PRO_0000459599" description="Collagen alpha-2(I) chain">
    <location>
        <begin position="1"/>
        <end position="1127"/>
    </location>
</feature>
<feature type="domain" description="Fibrillar collagen NC1" evidence="1">
    <location>
        <begin position="1093"/>
        <end position="1127"/>
    </location>
</feature>
<feature type="region of interest" description="Disordered" evidence="2">
    <location>
        <begin position="1"/>
        <end position="1017"/>
    </location>
</feature>
<feature type="compositionally biased region" description="Pro residues" evidence="2">
    <location>
        <begin position="1"/>
        <end position="16"/>
    </location>
</feature>
<feature type="compositionally biased region" description="Low complexity" evidence="2">
    <location>
        <begin position="171"/>
        <end position="191"/>
    </location>
</feature>
<feature type="compositionally biased region" description="Low complexity" evidence="2">
    <location>
        <begin position="221"/>
        <end position="230"/>
    </location>
</feature>
<feature type="compositionally biased region" description="Low complexity" evidence="2">
    <location>
        <begin position="237"/>
        <end position="258"/>
    </location>
</feature>
<feature type="compositionally biased region" description="Pro residues" evidence="2">
    <location>
        <begin position="260"/>
        <end position="270"/>
    </location>
</feature>
<feature type="compositionally biased region" description="Low complexity" evidence="2">
    <location>
        <begin position="272"/>
        <end position="282"/>
    </location>
</feature>
<feature type="compositionally biased region" description="Gly residues" evidence="2">
    <location>
        <begin position="289"/>
        <end position="298"/>
    </location>
</feature>
<feature type="compositionally biased region" description="Low complexity" evidence="2">
    <location>
        <begin position="326"/>
        <end position="345"/>
    </location>
</feature>
<feature type="compositionally biased region" description="Low complexity" evidence="2">
    <location>
        <begin position="355"/>
        <end position="398"/>
    </location>
</feature>
<feature type="compositionally biased region" description="Low complexity" evidence="2">
    <location>
        <begin position="436"/>
        <end position="449"/>
    </location>
</feature>
<feature type="compositionally biased region" description="Low complexity" evidence="2">
    <location>
        <begin position="461"/>
        <end position="473"/>
    </location>
</feature>
<feature type="compositionally biased region" description="Gly residues" evidence="2">
    <location>
        <begin position="474"/>
        <end position="483"/>
    </location>
</feature>
<feature type="compositionally biased region" description="Low complexity" evidence="2">
    <location>
        <begin position="508"/>
        <end position="518"/>
    </location>
</feature>
<feature type="compositionally biased region" description="Gly residues" evidence="2">
    <location>
        <begin position="531"/>
        <end position="568"/>
    </location>
</feature>
<feature type="compositionally biased region" description="Basic and acidic residues" evidence="2">
    <location>
        <begin position="569"/>
        <end position="580"/>
    </location>
</feature>
<feature type="compositionally biased region" description="Low complexity" evidence="2">
    <location>
        <begin position="611"/>
        <end position="625"/>
    </location>
</feature>
<feature type="compositionally biased region" description="Low complexity" evidence="2">
    <location>
        <begin position="634"/>
        <end position="647"/>
    </location>
</feature>
<feature type="compositionally biased region" description="Gly residues" evidence="2">
    <location>
        <begin position="657"/>
        <end position="666"/>
    </location>
</feature>
<feature type="compositionally biased region" description="Low complexity" evidence="2">
    <location>
        <begin position="667"/>
        <end position="692"/>
    </location>
</feature>
<feature type="compositionally biased region" description="Low complexity" evidence="2">
    <location>
        <begin position="703"/>
        <end position="730"/>
    </location>
</feature>
<feature type="compositionally biased region" description="Low complexity" evidence="2">
    <location>
        <begin position="758"/>
        <end position="778"/>
    </location>
</feature>
<feature type="compositionally biased region" description="Gly residues" evidence="2">
    <location>
        <begin position="792"/>
        <end position="801"/>
    </location>
</feature>
<feature type="compositionally biased region" description="Low complexity" evidence="2">
    <location>
        <begin position="802"/>
        <end position="824"/>
    </location>
</feature>
<feature type="compositionally biased region" description="Low complexity" evidence="2">
    <location>
        <begin position="860"/>
        <end position="872"/>
    </location>
</feature>
<feature type="compositionally biased region" description="Gly residues" evidence="2">
    <location>
        <begin position="876"/>
        <end position="897"/>
    </location>
</feature>
<feature type="compositionally biased region" description="Low complexity" evidence="2">
    <location>
        <begin position="898"/>
        <end position="913"/>
    </location>
</feature>
<feature type="compositionally biased region" description="Basic and acidic residues" evidence="2">
    <location>
        <begin position="914"/>
        <end position="928"/>
    </location>
</feature>
<feature type="compositionally biased region" description="Low complexity" evidence="2">
    <location>
        <begin position="937"/>
        <end position="956"/>
    </location>
</feature>
<feature type="compositionally biased region" description="Low complexity" evidence="2">
    <location>
        <begin position="986"/>
        <end position="997"/>
    </location>
</feature>
<feature type="compositionally biased region" description="Pro residues" evidence="2">
    <location>
        <begin position="998"/>
        <end position="1010"/>
    </location>
</feature>
<feature type="non-consecutive residues" evidence="3">
    <location>
        <begin position="180"/>
        <end position="181"/>
    </location>
</feature>
<feature type="non-consecutive residues" evidence="3">
    <location>
        <begin position="350"/>
        <end position="351"/>
    </location>
</feature>
<feature type="non-consecutive residues" evidence="3">
    <location>
        <begin position="413"/>
        <end position="414"/>
    </location>
</feature>
<feature type="non-consecutive residues" evidence="3">
    <location>
        <begin position="768"/>
        <end position="769"/>
    </location>
</feature>
<feature type="non-consecutive residues" evidence="3">
    <location>
        <begin position="1027"/>
        <end position="1028"/>
    </location>
</feature>
<feature type="non-consecutive residues" evidence="3">
    <location>
        <begin position="1055"/>
        <end position="1056"/>
    </location>
</feature>
<feature type="non-consecutive residues" evidence="3">
    <location>
        <begin position="1068"/>
        <end position="1069"/>
    </location>
</feature>
<feature type="non-consecutive residues" evidence="3">
    <location>
        <begin position="1081"/>
        <end position="1082"/>
    </location>
</feature>
<feature type="non-consecutive residues" evidence="3">
    <location>
        <begin position="1093"/>
        <end position="1094"/>
    </location>
</feature>
<feature type="non-terminal residue" evidence="3">
    <location>
        <position position="1"/>
    </location>
</feature>
<reference evidence="4" key="1">
    <citation type="submission" date="2023-05" db="UniProtKB">
        <title>Grouping groupers in the Mediterranean: ecological baselines revealed by ancient proteins.</title>
        <authorList>
            <person name="Winter R.M."/>
            <person name="de Kock W."/>
            <person name="Mackie M."/>
            <person name="Ramsoe M."/>
            <person name="Desidera E."/>
            <person name="Collins M."/>
            <person name="Guidetti P."/>
            <person name="Presslee S."/>
            <person name="Munoz-Alegre M."/>
            <person name="Oueslati T."/>
            <person name="Morales-Muniz A."/>
            <person name="Michailidis D."/>
            <person name="van den Hurk Y."/>
            <person name="Taurozzi A.J."/>
            <person name="Cakirlar C."/>
        </authorList>
    </citation>
    <scope>PROTEIN SEQUENCE</scope>
    <scope>IDENTIFICATION BY MASS SPECTROMETRY</scope>
    <source>
        <tissue evidence="3">Bone</tissue>
    </source>
</reference>
<keyword id="KW-0176">Collagen</keyword>
<keyword id="KW-0903">Direct protein sequencing</keyword>
<keyword id="KW-0272">Extracellular matrix</keyword>
<keyword id="KW-0964">Secreted</keyword>
<comment type="subcellular location">
    <subcellularLocation>
        <location evidence="1">Secreted</location>
        <location evidence="1">Extracellular space</location>
        <location evidence="1">Extracellular matrix</location>
    </subcellularLocation>
</comment>
<comment type="similarity">
    <text evidence="1">Belongs to the fibrillar collagen family.</text>
</comment>
<proteinExistence type="evidence at protein level"/>